<gene>
    <name type="ORF">GH22720</name>
</gene>
<sequence length="245" mass="27135">MAQAESSTEVVLVDIEGTTTSISFVHDVLFPYAKENAKDYLLETWQTDETKLIVKELQQLPHYTEYAANLATQPTLDAEAISRFVRYLIERDLKVTPLKTLQGLIWAKGYADGQLRGHVYEDVAGAFGKWHQDGIRIAVYSSGSVAAQKLIFQHSIAGDLLPHLSAHFDTHIGHKQQSESYTKIAESLQVQPQHVLFLTDVPQEAAAARAAGMLTTLLERPGNAPLSEEERKKFSSVADFTGIVV</sequence>
<keyword id="KW-0028">Amino-acid biosynthesis</keyword>
<keyword id="KW-0963">Cytoplasm</keyword>
<keyword id="KW-0378">Hydrolase</keyword>
<keyword id="KW-0460">Magnesium</keyword>
<keyword id="KW-0479">Metal-binding</keyword>
<keyword id="KW-0486">Methionine biosynthesis</keyword>
<keyword id="KW-0539">Nucleus</keyword>
<keyword id="KW-1185">Reference proteome</keyword>
<accession>B4JSP3</accession>
<organism>
    <name type="scientific">Drosophila grimshawi</name>
    <name type="common">Hawaiian fruit fly</name>
    <name type="synonym">Idiomyia grimshawi</name>
    <dbReference type="NCBI Taxonomy" id="7222"/>
    <lineage>
        <taxon>Eukaryota</taxon>
        <taxon>Metazoa</taxon>
        <taxon>Ecdysozoa</taxon>
        <taxon>Arthropoda</taxon>
        <taxon>Hexapoda</taxon>
        <taxon>Insecta</taxon>
        <taxon>Pterygota</taxon>
        <taxon>Neoptera</taxon>
        <taxon>Endopterygota</taxon>
        <taxon>Diptera</taxon>
        <taxon>Brachycera</taxon>
        <taxon>Muscomorpha</taxon>
        <taxon>Ephydroidea</taxon>
        <taxon>Drosophilidae</taxon>
        <taxon>Drosophila</taxon>
        <taxon>Hawaiian Drosophila</taxon>
    </lineage>
</organism>
<dbReference type="EC" id="3.1.3.77" evidence="1"/>
<dbReference type="EMBL" id="CH916373">
    <property type="protein sequence ID" value="EDV94783.1"/>
    <property type="molecule type" value="Genomic_DNA"/>
</dbReference>
<dbReference type="SMR" id="B4JSP3"/>
<dbReference type="FunCoup" id="B4JSP3">
    <property type="interactions" value="2094"/>
</dbReference>
<dbReference type="STRING" id="7222.B4JSP3"/>
<dbReference type="EnsemblMetazoa" id="FBtr0158134">
    <property type="protein sequence ID" value="FBpp0156626"/>
    <property type="gene ID" value="FBgn0130177"/>
</dbReference>
<dbReference type="EnsemblMetazoa" id="XM_001994011.3">
    <property type="protein sequence ID" value="XP_001994047.1"/>
    <property type="gene ID" value="LOC6567744"/>
</dbReference>
<dbReference type="GeneID" id="6567744"/>
<dbReference type="KEGG" id="dgr:6567744"/>
<dbReference type="CTD" id="40630"/>
<dbReference type="eggNOG" id="KOG2630">
    <property type="taxonomic scope" value="Eukaryota"/>
</dbReference>
<dbReference type="HOGENOM" id="CLU_023273_0_0_1"/>
<dbReference type="InParanoid" id="B4JSP3"/>
<dbReference type="OMA" id="LQGMVWE"/>
<dbReference type="OrthoDB" id="272500at2759"/>
<dbReference type="PhylomeDB" id="B4JSP3"/>
<dbReference type="UniPathway" id="UPA00904">
    <property type="reaction ID" value="UER00876"/>
</dbReference>
<dbReference type="UniPathway" id="UPA00904">
    <property type="reaction ID" value="UER00877"/>
</dbReference>
<dbReference type="Proteomes" id="UP000001070">
    <property type="component" value="Unassembled WGS sequence"/>
</dbReference>
<dbReference type="GO" id="GO:0005737">
    <property type="term" value="C:cytoplasm"/>
    <property type="evidence" value="ECO:0007669"/>
    <property type="project" value="UniProtKB-SubCell"/>
</dbReference>
<dbReference type="GO" id="GO:0005634">
    <property type="term" value="C:nucleus"/>
    <property type="evidence" value="ECO:0007669"/>
    <property type="project" value="UniProtKB-SubCell"/>
</dbReference>
<dbReference type="GO" id="GO:0043874">
    <property type="term" value="F:acireductone synthase activity"/>
    <property type="evidence" value="ECO:0007669"/>
    <property type="project" value="UniProtKB-EC"/>
</dbReference>
<dbReference type="GO" id="GO:0000287">
    <property type="term" value="F:magnesium ion binding"/>
    <property type="evidence" value="ECO:0007669"/>
    <property type="project" value="UniProtKB-UniRule"/>
</dbReference>
<dbReference type="GO" id="GO:0019509">
    <property type="term" value="P:L-methionine salvage from methylthioadenosine"/>
    <property type="evidence" value="ECO:0007669"/>
    <property type="project" value="UniProtKB-UniRule"/>
</dbReference>
<dbReference type="CDD" id="cd01629">
    <property type="entry name" value="HAD_EP"/>
    <property type="match status" value="1"/>
</dbReference>
<dbReference type="FunFam" id="3.40.50.1000:FF:000079">
    <property type="entry name" value="Enolase-phosphatase E1"/>
    <property type="match status" value="1"/>
</dbReference>
<dbReference type="Gene3D" id="1.10.720.60">
    <property type="match status" value="1"/>
</dbReference>
<dbReference type="Gene3D" id="3.40.50.1000">
    <property type="entry name" value="HAD superfamily/HAD-like"/>
    <property type="match status" value="1"/>
</dbReference>
<dbReference type="HAMAP" id="MF_01681">
    <property type="entry name" value="Salvage_MtnC"/>
    <property type="match status" value="1"/>
</dbReference>
<dbReference type="HAMAP" id="MF_03117">
    <property type="entry name" value="Salvage_MtnC_euk"/>
    <property type="match status" value="1"/>
</dbReference>
<dbReference type="InterPro" id="IPR023943">
    <property type="entry name" value="Enolase-ppase_E1"/>
</dbReference>
<dbReference type="InterPro" id="IPR027511">
    <property type="entry name" value="ENOPH1_eukaryotes"/>
</dbReference>
<dbReference type="InterPro" id="IPR036412">
    <property type="entry name" value="HAD-like_sf"/>
</dbReference>
<dbReference type="InterPro" id="IPR006439">
    <property type="entry name" value="HAD-SF_hydro_IA"/>
</dbReference>
<dbReference type="InterPro" id="IPR023214">
    <property type="entry name" value="HAD_sf"/>
</dbReference>
<dbReference type="NCBIfam" id="TIGR01691">
    <property type="entry name" value="enolase-ppase"/>
    <property type="match status" value="1"/>
</dbReference>
<dbReference type="NCBIfam" id="TIGR01549">
    <property type="entry name" value="HAD-SF-IA-v1"/>
    <property type="match status" value="1"/>
</dbReference>
<dbReference type="PANTHER" id="PTHR20371">
    <property type="entry name" value="ENOLASE-PHOSPHATASE E1"/>
    <property type="match status" value="1"/>
</dbReference>
<dbReference type="PANTHER" id="PTHR20371:SF1">
    <property type="entry name" value="ENOLASE-PHOSPHATASE E1"/>
    <property type="match status" value="1"/>
</dbReference>
<dbReference type="Pfam" id="PF00702">
    <property type="entry name" value="Hydrolase"/>
    <property type="match status" value="1"/>
</dbReference>
<dbReference type="SFLD" id="SFLDG01133">
    <property type="entry name" value="C1.5.4:_Enolase-phosphatase_Li"/>
    <property type="match status" value="1"/>
</dbReference>
<dbReference type="SFLD" id="SFLDF00044">
    <property type="entry name" value="enolase-phosphatase"/>
    <property type="match status" value="1"/>
</dbReference>
<dbReference type="SUPFAM" id="SSF56784">
    <property type="entry name" value="HAD-like"/>
    <property type="match status" value="1"/>
</dbReference>
<protein>
    <recommendedName>
        <fullName evidence="1">Enolase-phosphatase E1</fullName>
        <ecNumber evidence="1">3.1.3.77</ecNumber>
    </recommendedName>
    <alternativeName>
        <fullName evidence="1">2,3-diketo-5-methylthio-1-phosphopentane phosphatase</fullName>
    </alternativeName>
</protein>
<feature type="chain" id="PRO_0000393978" description="Enolase-phosphatase E1">
    <location>
        <begin position="1"/>
        <end position="245"/>
    </location>
</feature>
<feature type="binding site" evidence="1">
    <location>
        <position position="14"/>
    </location>
    <ligand>
        <name>Mg(2+)</name>
        <dbReference type="ChEBI" id="CHEBI:18420"/>
    </ligand>
</feature>
<feature type="binding site" evidence="1">
    <location>
        <position position="16"/>
    </location>
    <ligand>
        <name>Mg(2+)</name>
        <dbReference type="ChEBI" id="CHEBI:18420"/>
    </ligand>
</feature>
<feature type="binding site" evidence="1">
    <location>
        <begin position="141"/>
        <end position="142"/>
    </location>
    <ligand>
        <name>substrate</name>
    </ligand>
</feature>
<feature type="binding site" evidence="1">
    <location>
        <position position="175"/>
    </location>
    <ligand>
        <name>substrate</name>
    </ligand>
</feature>
<feature type="binding site" evidence="1">
    <location>
        <position position="200"/>
    </location>
    <ligand>
        <name>Mg(2+)</name>
        <dbReference type="ChEBI" id="CHEBI:18420"/>
    </ligand>
</feature>
<evidence type="ECO:0000255" key="1">
    <source>
        <dbReference type="HAMAP-Rule" id="MF_03117"/>
    </source>
</evidence>
<proteinExistence type="inferred from homology"/>
<reference key="1">
    <citation type="journal article" date="2007" name="Nature">
        <title>Evolution of genes and genomes on the Drosophila phylogeny.</title>
        <authorList>
            <consortium name="Drosophila 12 genomes consortium"/>
        </authorList>
    </citation>
    <scope>NUCLEOTIDE SEQUENCE [LARGE SCALE GENOMIC DNA]</scope>
    <source>
        <strain>Tucson 15287-2541.00</strain>
    </source>
</reference>
<name>ENOPH_DROGR</name>
<comment type="function">
    <text evidence="1">Bifunctional enzyme that catalyzes the enolization of 2,3-diketo-5-methylthiopentyl-1-phosphate (DK-MTP-1-P) into the intermediate 2-hydroxy-3-keto-5-methylthiopentenyl-1-phosphate (HK-MTPenyl-1-P), which is then dephosphorylated to form the acireductone 1,2-dihydroxy-3-keto-5-methylthiopentene (DHK-MTPene).</text>
</comment>
<comment type="catalytic activity">
    <reaction evidence="1">
        <text>5-methylsulfanyl-2,3-dioxopentyl phosphate + H2O = 1,2-dihydroxy-5-(methylsulfanyl)pent-1-en-3-one + phosphate</text>
        <dbReference type="Rhea" id="RHEA:21700"/>
        <dbReference type="ChEBI" id="CHEBI:15377"/>
        <dbReference type="ChEBI" id="CHEBI:43474"/>
        <dbReference type="ChEBI" id="CHEBI:49252"/>
        <dbReference type="ChEBI" id="CHEBI:58828"/>
        <dbReference type="EC" id="3.1.3.77"/>
    </reaction>
</comment>
<comment type="cofactor">
    <cofactor evidence="1">
        <name>Mg(2+)</name>
        <dbReference type="ChEBI" id="CHEBI:18420"/>
    </cofactor>
    <text evidence="1">Binds 1 Mg(2+) ion per subunit.</text>
</comment>
<comment type="pathway">
    <text evidence="1">Amino-acid biosynthesis; L-methionine biosynthesis via salvage pathway; L-methionine from S-methyl-5-thio-alpha-D-ribose 1-phosphate: step 3/6.</text>
</comment>
<comment type="pathway">
    <text evidence="1">Amino-acid biosynthesis; L-methionine biosynthesis via salvage pathway; L-methionine from S-methyl-5-thio-alpha-D-ribose 1-phosphate: step 4/6.</text>
</comment>
<comment type="subunit">
    <text evidence="1">Monomer.</text>
</comment>
<comment type="subcellular location">
    <subcellularLocation>
        <location evidence="1">Cytoplasm</location>
    </subcellularLocation>
    <subcellularLocation>
        <location evidence="1">Nucleus</location>
    </subcellularLocation>
</comment>
<comment type="similarity">
    <text evidence="1">Belongs to the HAD-like hydrolase superfamily. MasA/MtnC family.</text>
</comment>